<keyword id="KW-0963">Cytoplasm</keyword>
<keyword id="KW-0489">Methyltransferase</keyword>
<keyword id="KW-1185">Reference proteome</keyword>
<keyword id="KW-0698">rRNA processing</keyword>
<keyword id="KW-0949">S-adenosyl-L-methionine</keyword>
<keyword id="KW-0808">Transferase</keyword>
<dbReference type="EC" id="2.1.1.166" evidence="1"/>
<dbReference type="EMBL" id="CP000230">
    <property type="protein sequence ID" value="ABC21050.1"/>
    <property type="molecule type" value="Genomic_DNA"/>
</dbReference>
<dbReference type="RefSeq" id="WP_011387998.1">
    <property type="nucleotide sequence ID" value="NC_007643.1"/>
</dbReference>
<dbReference type="RefSeq" id="YP_425337.1">
    <property type="nucleotide sequence ID" value="NC_007643.1"/>
</dbReference>
<dbReference type="SMR" id="Q2RXU5"/>
<dbReference type="STRING" id="269796.Rru_A0245"/>
<dbReference type="EnsemblBacteria" id="ABC21050">
    <property type="protein sequence ID" value="ABC21050"/>
    <property type="gene ID" value="Rru_A0245"/>
</dbReference>
<dbReference type="KEGG" id="rru:Rru_A0245"/>
<dbReference type="PATRIC" id="fig|269796.9.peg.299"/>
<dbReference type="eggNOG" id="COG0293">
    <property type="taxonomic scope" value="Bacteria"/>
</dbReference>
<dbReference type="HOGENOM" id="CLU_009422_4_0_5"/>
<dbReference type="PhylomeDB" id="Q2RXU5"/>
<dbReference type="Proteomes" id="UP000001929">
    <property type="component" value="Chromosome"/>
</dbReference>
<dbReference type="GO" id="GO:0005737">
    <property type="term" value="C:cytoplasm"/>
    <property type="evidence" value="ECO:0007669"/>
    <property type="project" value="UniProtKB-SubCell"/>
</dbReference>
<dbReference type="GO" id="GO:0008650">
    <property type="term" value="F:rRNA (uridine-2'-O-)-methyltransferase activity"/>
    <property type="evidence" value="ECO:0007669"/>
    <property type="project" value="UniProtKB-UniRule"/>
</dbReference>
<dbReference type="Gene3D" id="3.40.50.150">
    <property type="entry name" value="Vaccinia Virus protein VP39"/>
    <property type="match status" value="1"/>
</dbReference>
<dbReference type="HAMAP" id="MF_01547">
    <property type="entry name" value="RNA_methyltr_E"/>
    <property type="match status" value="1"/>
</dbReference>
<dbReference type="InterPro" id="IPR050082">
    <property type="entry name" value="RNA_methyltr_RlmE"/>
</dbReference>
<dbReference type="InterPro" id="IPR002877">
    <property type="entry name" value="RNA_MeTrfase_FtsJ_dom"/>
</dbReference>
<dbReference type="InterPro" id="IPR015507">
    <property type="entry name" value="rRNA-MeTfrase_E"/>
</dbReference>
<dbReference type="InterPro" id="IPR029063">
    <property type="entry name" value="SAM-dependent_MTases_sf"/>
</dbReference>
<dbReference type="PANTHER" id="PTHR10920">
    <property type="entry name" value="RIBOSOMAL RNA METHYLTRANSFERASE"/>
    <property type="match status" value="1"/>
</dbReference>
<dbReference type="PANTHER" id="PTHR10920:SF18">
    <property type="entry name" value="RRNA METHYLTRANSFERASE 2, MITOCHONDRIAL"/>
    <property type="match status" value="1"/>
</dbReference>
<dbReference type="Pfam" id="PF01728">
    <property type="entry name" value="FtsJ"/>
    <property type="match status" value="1"/>
</dbReference>
<dbReference type="PIRSF" id="PIRSF005461">
    <property type="entry name" value="23S_rRNA_mtase"/>
    <property type="match status" value="1"/>
</dbReference>
<dbReference type="SUPFAM" id="SSF53335">
    <property type="entry name" value="S-adenosyl-L-methionine-dependent methyltransferases"/>
    <property type="match status" value="1"/>
</dbReference>
<proteinExistence type="inferred from homology"/>
<name>RLME_RHORT</name>
<evidence type="ECO:0000255" key="1">
    <source>
        <dbReference type="HAMAP-Rule" id="MF_01547"/>
    </source>
</evidence>
<evidence type="ECO:0000256" key="2">
    <source>
        <dbReference type="SAM" id="MobiDB-lite"/>
    </source>
</evidence>
<protein>
    <recommendedName>
        <fullName evidence="1">Ribosomal RNA large subunit methyltransferase E</fullName>
        <ecNumber evidence="1">2.1.1.166</ecNumber>
    </recommendedName>
    <alternativeName>
        <fullName evidence="1">23S rRNA Um2552 methyltransferase</fullName>
    </alternativeName>
    <alternativeName>
        <fullName evidence="1">rRNA (uridine-2'-O-)-methyltransferase</fullName>
    </alternativeName>
</protein>
<organism>
    <name type="scientific">Rhodospirillum rubrum (strain ATCC 11170 / ATH 1.1.1 / DSM 467 / LMG 4362 / NCIMB 8255 / S1)</name>
    <dbReference type="NCBI Taxonomy" id="269796"/>
    <lineage>
        <taxon>Bacteria</taxon>
        <taxon>Pseudomonadati</taxon>
        <taxon>Pseudomonadota</taxon>
        <taxon>Alphaproteobacteria</taxon>
        <taxon>Rhodospirillales</taxon>
        <taxon>Rhodospirillaceae</taxon>
        <taxon>Rhodospirillum</taxon>
    </lineage>
</organism>
<sequence>MSSAEGPKSGGGSKGSKSEASSRVRGSAPTGSRDLFVRVRTAKGRKASSTRWLQRQLNDPYVLEAKRQGLRSRAAFKLIELDERFTLLKPGMRVVDLGAAPGGWTQIAVERTRSLHPNGGKVVGMDILEWEGVAGATCLTHDFMDDAAPLMLKGAMDGAVDLVLSDMAAPTTGHRQTDHLRVMGLAEAAWYFAEEVLAPGGAFVCKVFQGGTEGALLTRMKKMCEVIRHAKPPASRQGSPEVYVIAQGFRGLSGGEDTGRDES</sequence>
<gene>
    <name evidence="1" type="primary">rlmE</name>
    <name evidence="1" type="synonym">ftsJ</name>
    <name evidence="1" type="synonym">rrmJ</name>
    <name type="ordered locus">Rru_A0245</name>
</gene>
<accession>Q2RXU5</accession>
<feature type="chain" id="PRO_0000282790" description="Ribosomal RNA large subunit methyltransferase E">
    <location>
        <begin position="1"/>
        <end position="263"/>
    </location>
</feature>
<feature type="region of interest" description="Disordered" evidence="2">
    <location>
        <begin position="1"/>
        <end position="34"/>
    </location>
</feature>
<feature type="active site" description="Proton acceptor" evidence="1">
    <location>
        <position position="206"/>
    </location>
</feature>
<feature type="binding site" evidence="1">
    <location>
        <position position="102"/>
    </location>
    <ligand>
        <name>S-adenosyl-L-methionine</name>
        <dbReference type="ChEBI" id="CHEBI:59789"/>
    </ligand>
</feature>
<feature type="binding site" evidence="1">
    <location>
        <position position="104"/>
    </location>
    <ligand>
        <name>S-adenosyl-L-methionine</name>
        <dbReference type="ChEBI" id="CHEBI:59789"/>
    </ligand>
</feature>
<feature type="binding site" evidence="1">
    <location>
        <position position="126"/>
    </location>
    <ligand>
        <name>S-adenosyl-L-methionine</name>
        <dbReference type="ChEBI" id="CHEBI:59789"/>
    </ligand>
</feature>
<feature type="binding site" evidence="1">
    <location>
        <position position="142"/>
    </location>
    <ligand>
        <name>S-adenosyl-L-methionine</name>
        <dbReference type="ChEBI" id="CHEBI:59789"/>
    </ligand>
</feature>
<feature type="binding site" evidence="1">
    <location>
        <position position="166"/>
    </location>
    <ligand>
        <name>S-adenosyl-L-methionine</name>
        <dbReference type="ChEBI" id="CHEBI:59789"/>
    </ligand>
</feature>
<reference key="1">
    <citation type="journal article" date="2011" name="Stand. Genomic Sci.">
        <title>Complete genome sequence of Rhodospirillum rubrum type strain (S1).</title>
        <authorList>
            <person name="Munk A.C."/>
            <person name="Copeland A."/>
            <person name="Lucas S."/>
            <person name="Lapidus A."/>
            <person name="Del Rio T.G."/>
            <person name="Barry K."/>
            <person name="Detter J.C."/>
            <person name="Hammon N."/>
            <person name="Israni S."/>
            <person name="Pitluck S."/>
            <person name="Brettin T."/>
            <person name="Bruce D."/>
            <person name="Han C."/>
            <person name="Tapia R."/>
            <person name="Gilna P."/>
            <person name="Schmutz J."/>
            <person name="Larimer F."/>
            <person name="Land M."/>
            <person name="Kyrpides N.C."/>
            <person name="Mavromatis K."/>
            <person name="Richardson P."/>
            <person name="Rohde M."/>
            <person name="Goeker M."/>
            <person name="Klenk H.P."/>
            <person name="Zhang Y."/>
            <person name="Roberts G.P."/>
            <person name="Reslewic S."/>
            <person name="Schwartz D.C."/>
        </authorList>
    </citation>
    <scope>NUCLEOTIDE SEQUENCE [LARGE SCALE GENOMIC DNA]</scope>
    <source>
        <strain>ATCC 11170 / ATH 1.1.1 / DSM 467 / LMG 4362 / NCIMB 8255 / S1</strain>
    </source>
</reference>
<comment type="function">
    <text evidence="1">Specifically methylates the uridine in position 2552 of 23S rRNA at the 2'-O position of the ribose in the fully assembled 50S ribosomal subunit.</text>
</comment>
<comment type="catalytic activity">
    <reaction evidence="1">
        <text>uridine(2552) in 23S rRNA + S-adenosyl-L-methionine = 2'-O-methyluridine(2552) in 23S rRNA + S-adenosyl-L-homocysteine + H(+)</text>
        <dbReference type="Rhea" id="RHEA:42720"/>
        <dbReference type="Rhea" id="RHEA-COMP:10202"/>
        <dbReference type="Rhea" id="RHEA-COMP:10203"/>
        <dbReference type="ChEBI" id="CHEBI:15378"/>
        <dbReference type="ChEBI" id="CHEBI:57856"/>
        <dbReference type="ChEBI" id="CHEBI:59789"/>
        <dbReference type="ChEBI" id="CHEBI:65315"/>
        <dbReference type="ChEBI" id="CHEBI:74478"/>
        <dbReference type="EC" id="2.1.1.166"/>
    </reaction>
</comment>
<comment type="subcellular location">
    <subcellularLocation>
        <location evidence="1">Cytoplasm</location>
    </subcellularLocation>
</comment>
<comment type="similarity">
    <text evidence="1">Belongs to the class I-like SAM-binding methyltransferase superfamily. RNA methyltransferase RlmE family.</text>
</comment>